<keyword id="KW-0489">Methyltransferase</keyword>
<keyword id="KW-1185">Reference proteome</keyword>
<keyword id="KW-0949">S-adenosyl-L-methionine</keyword>
<keyword id="KW-0808">Transferase</keyword>
<keyword id="KW-0819">tRNA processing</keyword>
<gene>
    <name evidence="1" type="primary">trmA</name>
    <name type="ordered locus">Sfri_0125</name>
</gene>
<feature type="chain" id="PRO_0000281460" description="tRNA/tmRNA (uracil-C(5))-methyltransferase">
    <location>
        <begin position="1"/>
        <end position="365"/>
    </location>
</feature>
<feature type="active site" description="Nucleophile" evidence="1">
    <location>
        <position position="323"/>
    </location>
</feature>
<feature type="active site" description="Proton acceptor" evidence="1">
    <location>
        <position position="357"/>
    </location>
</feature>
<feature type="binding site" evidence="1">
    <location>
        <position position="189"/>
    </location>
    <ligand>
        <name>S-adenosyl-L-methionine</name>
        <dbReference type="ChEBI" id="CHEBI:59789"/>
    </ligand>
</feature>
<feature type="binding site" evidence="1">
    <location>
        <position position="217"/>
    </location>
    <ligand>
        <name>S-adenosyl-L-methionine</name>
        <dbReference type="ChEBI" id="CHEBI:59789"/>
    </ligand>
</feature>
<feature type="binding site" evidence="1">
    <location>
        <position position="222"/>
    </location>
    <ligand>
        <name>S-adenosyl-L-methionine</name>
        <dbReference type="ChEBI" id="CHEBI:59789"/>
    </ligand>
</feature>
<feature type="binding site" evidence="1">
    <location>
        <position position="238"/>
    </location>
    <ligand>
        <name>S-adenosyl-L-methionine</name>
        <dbReference type="ChEBI" id="CHEBI:59789"/>
    </ligand>
</feature>
<feature type="binding site" evidence="1">
    <location>
        <position position="298"/>
    </location>
    <ligand>
        <name>S-adenosyl-L-methionine</name>
        <dbReference type="ChEBI" id="CHEBI:59789"/>
    </ligand>
</feature>
<comment type="function">
    <text evidence="1">Dual-specificity methyltransferase that catalyzes the formation of 5-methyluridine at position 54 (m5U54) in all tRNAs, and that of position 341 (m5U341) in tmRNA (transfer-mRNA).</text>
</comment>
<comment type="catalytic activity">
    <reaction evidence="1">
        <text>uridine(54) in tRNA + S-adenosyl-L-methionine = 5-methyluridine(54) in tRNA + S-adenosyl-L-homocysteine + H(+)</text>
        <dbReference type="Rhea" id="RHEA:42712"/>
        <dbReference type="Rhea" id="RHEA-COMP:10167"/>
        <dbReference type="Rhea" id="RHEA-COMP:10193"/>
        <dbReference type="ChEBI" id="CHEBI:15378"/>
        <dbReference type="ChEBI" id="CHEBI:57856"/>
        <dbReference type="ChEBI" id="CHEBI:59789"/>
        <dbReference type="ChEBI" id="CHEBI:65315"/>
        <dbReference type="ChEBI" id="CHEBI:74447"/>
        <dbReference type="EC" id="2.1.1.35"/>
    </reaction>
</comment>
<comment type="catalytic activity">
    <reaction evidence="1">
        <text>uridine(341) in tmRNA + S-adenosyl-L-methionine = 5-methyluridine(341) in tmRNA + S-adenosyl-L-homocysteine + H(+)</text>
        <dbReference type="Rhea" id="RHEA:43612"/>
        <dbReference type="Rhea" id="RHEA-COMP:10630"/>
        <dbReference type="Rhea" id="RHEA-COMP:10631"/>
        <dbReference type="ChEBI" id="CHEBI:15378"/>
        <dbReference type="ChEBI" id="CHEBI:57856"/>
        <dbReference type="ChEBI" id="CHEBI:59789"/>
        <dbReference type="ChEBI" id="CHEBI:65315"/>
        <dbReference type="ChEBI" id="CHEBI:74447"/>
    </reaction>
</comment>
<comment type="similarity">
    <text evidence="1">Belongs to the class I-like SAM-binding methyltransferase superfamily. RNA M5U methyltransferase family. TrmA subfamily.</text>
</comment>
<dbReference type="EC" id="2.1.1.-" evidence="1"/>
<dbReference type="EC" id="2.1.1.35" evidence="1"/>
<dbReference type="EMBL" id="CP000447">
    <property type="protein sequence ID" value="ABI69988.1"/>
    <property type="molecule type" value="Genomic_DNA"/>
</dbReference>
<dbReference type="RefSeq" id="WP_011635617.1">
    <property type="nucleotide sequence ID" value="NC_008345.1"/>
</dbReference>
<dbReference type="SMR" id="Q089S7"/>
<dbReference type="STRING" id="318167.Sfri_0125"/>
<dbReference type="KEGG" id="sfr:Sfri_0125"/>
<dbReference type="eggNOG" id="COG2265">
    <property type="taxonomic scope" value="Bacteria"/>
</dbReference>
<dbReference type="HOGENOM" id="CLU_043022_0_0_6"/>
<dbReference type="OrthoDB" id="9804590at2"/>
<dbReference type="Proteomes" id="UP000000684">
    <property type="component" value="Chromosome"/>
</dbReference>
<dbReference type="GO" id="GO:0005829">
    <property type="term" value="C:cytosol"/>
    <property type="evidence" value="ECO:0007669"/>
    <property type="project" value="TreeGrafter"/>
</dbReference>
<dbReference type="GO" id="GO:0019843">
    <property type="term" value="F:rRNA binding"/>
    <property type="evidence" value="ECO:0007669"/>
    <property type="project" value="TreeGrafter"/>
</dbReference>
<dbReference type="GO" id="GO:0030697">
    <property type="term" value="F:tRNA (uracil(54)-C5)-methyltransferase activity, S-adenosyl methionine-dependent"/>
    <property type="evidence" value="ECO:0007669"/>
    <property type="project" value="UniProtKB-UniRule"/>
</dbReference>
<dbReference type="GO" id="GO:0000049">
    <property type="term" value="F:tRNA binding"/>
    <property type="evidence" value="ECO:0007669"/>
    <property type="project" value="TreeGrafter"/>
</dbReference>
<dbReference type="GO" id="GO:0030488">
    <property type="term" value="P:tRNA methylation"/>
    <property type="evidence" value="ECO:0007669"/>
    <property type="project" value="UniProtKB-UniRule"/>
</dbReference>
<dbReference type="CDD" id="cd02440">
    <property type="entry name" value="AdoMet_MTases"/>
    <property type="match status" value="1"/>
</dbReference>
<dbReference type="FunFam" id="2.40.50.1070:FF:000001">
    <property type="entry name" value="tRNA/tmRNA (uracil-C(5))-methyltransferase"/>
    <property type="match status" value="1"/>
</dbReference>
<dbReference type="FunFam" id="3.40.50.150:FF:000012">
    <property type="entry name" value="tRNA/tmRNA (uracil-C(5))-methyltransferase"/>
    <property type="match status" value="1"/>
</dbReference>
<dbReference type="Gene3D" id="2.40.50.1070">
    <property type="match status" value="1"/>
</dbReference>
<dbReference type="Gene3D" id="3.40.50.150">
    <property type="entry name" value="Vaccinia Virus protein VP39"/>
    <property type="match status" value="1"/>
</dbReference>
<dbReference type="HAMAP" id="MF_01011">
    <property type="entry name" value="RNA_methyltr_TrmA"/>
    <property type="match status" value="1"/>
</dbReference>
<dbReference type="InterPro" id="IPR030390">
    <property type="entry name" value="MeTrfase_TrmA_AS"/>
</dbReference>
<dbReference type="InterPro" id="IPR030391">
    <property type="entry name" value="MeTrfase_TrmA_CS"/>
</dbReference>
<dbReference type="InterPro" id="IPR029063">
    <property type="entry name" value="SAM-dependent_MTases_sf"/>
</dbReference>
<dbReference type="InterPro" id="IPR011869">
    <property type="entry name" value="TrmA_MeTrfase"/>
</dbReference>
<dbReference type="InterPro" id="IPR010280">
    <property type="entry name" value="U5_MeTrfase_fam"/>
</dbReference>
<dbReference type="NCBIfam" id="TIGR02143">
    <property type="entry name" value="trmA_only"/>
    <property type="match status" value="1"/>
</dbReference>
<dbReference type="PANTHER" id="PTHR47790">
    <property type="entry name" value="TRNA/TMRNA (URACIL-C(5))-METHYLTRANSFERASE"/>
    <property type="match status" value="1"/>
</dbReference>
<dbReference type="PANTHER" id="PTHR47790:SF2">
    <property type="entry name" value="TRNA_TMRNA (URACIL-C(5))-METHYLTRANSFERASE"/>
    <property type="match status" value="1"/>
</dbReference>
<dbReference type="Pfam" id="PF05958">
    <property type="entry name" value="tRNA_U5-meth_tr"/>
    <property type="match status" value="1"/>
</dbReference>
<dbReference type="SUPFAM" id="SSF53335">
    <property type="entry name" value="S-adenosyl-L-methionine-dependent methyltransferases"/>
    <property type="match status" value="1"/>
</dbReference>
<dbReference type="PROSITE" id="PS51687">
    <property type="entry name" value="SAM_MT_RNA_M5U"/>
    <property type="match status" value="1"/>
</dbReference>
<dbReference type="PROSITE" id="PS01230">
    <property type="entry name" value="TRMA_1"/>
    <property type="match status" value="1"/>
</dbReference>
<dbReference type="PROSITE" id="PS01231">
    <property type="entry name" value="TRMA_2"/>
    <property type="match status" value="1"/>
</dbReference>
<sequence>MNLAAMDPKNYDAQLQQKRIKLEKAFADFNPPALEVFASEPMHYRMRAEFRMWHQGDDLYYYMFDKALNAKVRCDQYLPAGLIINQMMAALIAELTPNPALRYRLFQVDFLSTLSGEILVSLLYHRQLDEEWREQATQLKAKLSAQFNVNIIGRARKQKIDLDKDFVVETLTVNEQVLHYKQIENSFTQPNAKVSVKMLEWAIDATKDSQGDLLELYCGNGNFTIALARNFNRVLATELAKPSVDAAQYNIDINHVDNVQIIRMSAEDFSDAMAKKRQFRRLEGIDLDSYDCNTIFVDPPRAGIDPETLKLIQGYERILYISCNPETLNDNLLTLGQTHKITRFALFDQFPYTDHMESGVLLVRK</sequence>
<name>TRMA_SHEFN</name>
<proteinExistence type="inferred from homology"/>
<reference key="1">
    <citation type="submission" date="2006-08" db="EMBL/GenBank/DDBJ databases">
        <title>Complete sequence of Shewanella frigidimarina NCIMB 400.</title>
        <authorList>
            <consortium name="US DOE Joint Genome Institute"/>
            <person name="Copeland A."/>
            <person name="Lucas S."/>
            <person name="Lapidus A."/>
            <person name="Barry K."/>
            <person name="Detter J.C."/>
            <person name="Glavina del Rio T."/>
            <person name="Hammon N."/>
            <person name="Israni S."/>
            <person name="Dalin E."/>
            <person name="Tice H."/>
            <person name="Pitluck S."/>
            <person name="Fredrickson J.K."/>
            <person name="Kolker E."/>
            <person name="McCuel L.A."/>
            <person name="DiChristina T."/>
            <person name="Nealson K.H."/>
            <person name="Newman D."/>
            <person name="Tiedje J.M."/>
            <person name="Zhou J."/>
            <person name="Romine M.F."/>
            <person name="Culley D.E."/>
            <person name="Serres M."/>
            <person name="Chertkov O."/>
            <person name="Brettin T."/>
            <person name="Bruce D."/>
            <person name="Han C."/>
            <person name="Tapia R."/>
            <person name="Gilna P."/>
            <person name="Schmutz J."/>
            <person name="Larimer F."/>
            <person name="Land M."/>
            <person name="Hauser L."/>
            <person name="Kyrpides N."/>
            <person name="Mikhailova N."/>
            <person name="Richardson P."/>
        </authorList>
    </citation>
    <scope>NUCLEOTIDE SEQUENCE [LARGE SCALE GENOMIC DNA]</scope>
    <source>
        <strain>NCIMB 400</strain>
    </source>
</reference>
<protein>
    <recommendedName>
        <fullName evidence="1">tRNA/tmRNA (uracil-C(5))-methyltransferase</fullName>
        <ecNumber evidence="1">2.1.1.-</ecNumber>
        <ecNumber evidence="1">2.1.1.35</ecNumber>
    </recommendedName>
    <alternativeName>
        <fullName evidence="1">tRNA (uracil(54)-C(5))-methyltransferase</fullName>
    </alternativeName>
    <alternativeName>
        <fullName evidence="1">tRNA(m5U54)-methyltransferase</fullName>
        <shortName evidence="1">RUMT</shortName>
    </alternativeName>
    <alternativeName>
        <fullName evidence="1">tmRNA (uracil(341)-C(5))-methyltransferase</fullName>
    </alternativeName>
</protein>
<evidence type="ECO:0000255" key="1">
    <source>
        <dbReference type="HAMAP-Rule" id="MF_01011"/>
    </source>
</evidence>
<accession>Q089S7</accession>
<organism>
    <name type="scientific">Shewanella frigidimarina (strain NCIMB 400)</name>
    <dbReference type="NCBI Taxonomy" id="318167"/>
    <lineage>
        <taxon>Bacteria</taxon>
        <taxon>Pseudomonadati</taxon>
        <taxon>Pseudomonadota</taxon>
        <taxon>Gammaproteobacteria</taxon>
        <taxon>Alteromonadales</taxon>
        <taxon>Shewanellaceae</taxon>
        <taxon>Shewanella</taxon>
    </lineage>
</organism>